<keyword id="KW-0456">Lyase</keyword>
<keyword id="KW-1185">Reference proteome</keyword>
<keyword id="KW-0786">Thiamine pyrophosphate</keyword>
<comment type="cofactor">
    <cofactor evidence="1">
        <name>thiamine diphosphate</name>
        <dbReference type="ChEBI" id="CHEBI:58937"/>
    </cofactor>
</comment>
<comment type="similarity">
    <text evidence="1">Belongs to the XFP family.</text>
</comment>
<sequence>MIETLESTQVSHETLRTIDAYWRAANYLSVGQIYLSDNPLLKRPLRIEDVKKMLLGHWGTTPGQNFIYAHLNRTIKQNDLNMIYVSGPGHGGPAVVANTYLEGSYSEIYPHISQDEAGMRKLFVQFSFPGGIPSHASPECPGSIHEGGELGYSLSHSFGAVFDNPDLIVACVVGDGEAETGPLATAWHSNKFLNPATDGAVLPILHLNGFKIANPTILARINHEELEQLMRGYGWTPIFVEGKDPMKMHAAMAEALDVAIGQIRSIQQNARETGDTSRPRWPMIVLRSPKGWTGPKFVDGVRNEGTFHSHQVPLSDPAKCPEHLKQIEQWLRSYRPEELLDENGRLRQEIADLAPTGDRRMGANPHANGGRLLRRLKMPDFRDYAVEISQRGCRGIGDTHVTGKFIRDIVRLNEEHKNFRIFGPDETISNGLEAVFDVTQRQWNAAIVEDDESLAPTGRVLEMLSEHQCEGWLEGYLLTGRHGLFNCYEAFVHIVDSMFNQHAKWLKVTSELPWRHKIASLNYLLASHVWRQDHNGFTHQDPGFLDVVVNKKAEIVRVYLPPDANCLLSVMDHCLRSQHYVNVVVAGKHPSPQWLTMGEAAEHCAKGIGIWDWAGNESSSDPDVVMACCGDVPTLETLAAVSILREHLPDLTIRVVNVVDLMRLQPKSEHPHGLSDSDFDALFTKNKHVIFAFHAYPWLVHRLTYRRTNHANIHVRGYKEEGTITTPFDMTVLNDLDRFHLVMDAIDRLPETGGRGQRLKALMQEKLVEHRRYINENGQDMPEIRDWEWSARS</sequence>
<proteinExistence type="inferred from homology"/>
<reference key="1">
    <citation type="journal article" date="2003" name="Proc. Natl. Acad. Sci. U.S.A.">
        <title>Complete genome sequence of the marine planctomycete Pirellula sp. strain 1.</title>
        <authorList>
            <person name="Gloeckner F.O."/>
            <person name="Kube M."/>
            <person name="Bauer M."/>
            <person name="Teeling H."/>
            <person name="Lombardot T."/>
            <person name="Ludwig W."/>
            <person name="Gade D."/>
            <person name="Beck A."/>
            <person name="Borzym K."/>
            <person name="Heitmann K."/>
            <person name="Rabus R."/>
            <person name="Schlesner H."/>
            <person name="Amann R."/>
            <person name="Reinhardt R."/>
        </authorList>
    </citation>
    <scope>NUCLEOTIDE SEQUENCE [LARGE SCALE GENOMIC DNA]</scope>
    <source>
        <strain>DSM 10527 / NCIMB 13988 / SH1</strain>
    </source>
</reference>
<feature type="chain" id="PRO_0000193888" description="Probable phosphoketolase">
    <location>
        <begin position="1"/>
        <end position="793"/>
    </location>
</feature>
<accession>Q7UH14</accession>
<gene>
    <name type="ordered locus">RB4903</name>
</gene>
<evidence type="ECO:0000255" key="1">
    <source>
        <dbReference type="HAMAP-Rule" id="MF_01403"/>
    </source>
</evidence>
<name>PHK_RHOBA</name>
<organism>
    <name type="scientific">Rhodopirellula baltica (strain DSM 10527 / NCIMB 13988 / SH1)</name>
    <dbReference type="NCBI Taxonomy" id="243090"/>
    <lineage>
        <taxon>Bacteria</taxon>
        <taxon>Pseudomonadati</taxon>
        <taxon>Planctomycetota</taxon>
        <taxon>Planctomycetia</taxon>
        <taxon>Pirellulales</taxon>
        <taxon>Pirellulaceae</taxon>
        <taxon>Rhodopirellula</taxon>
    </lineage>
</organism>
<dbReference type="EC" id="4.1.2.-" evidence="1"/>
<dbReference type="EMBL" id="BX294141">
    <property type="protein sequence ID" value="CAD78165.1"/>
    <property type="molecule type" value="Genomic_DNA"/>
</dbReference>
<dbReference type="RefSeq" id="NP_866384.1">
    <property type="nucleotide sequence ID" value="NC_005027.1"/>
</dbReference>
<dbReference type="RefSeq" id="WP_011120163.1">
    <property type="nucleotide sequence ID" value="NC_005027.1"/>
</dbReference>
<dbReference type="SMR" id="Q7UH14"/>
<dbReference type="STRING" id="243090.RB4903"/>
<dbReference type="EnsemblBacteria" id="CAD78165">
    <property type="protein sequence ID" value="CAD78165"/>
    <property type="gene ID" value="RB4903"/>
</dbReference>
<dbReference type="KEGG" id="rba:RB4903"/>
<dbReference type="PATRIC" id="fig|243090.15.peg.2329"/>
<dbReference type="eggNOG" id="COG3957">
    <property type="taxonomic scope" value="Bacteria"/>
</dbReference>
<dbReference type="HOGENOM" id="CLU_013954_2_0_0"/>
<dbReference type="InParanoid" id="Q7UH14"/>
<dbReference type="OrthoDB" id="9768449at2"/>
<dbReference type="Proteomes" id="UP000001025">
    <property type="component" value="Chromosome"/>
</dbReference>
<dbReference type="GO" id="GO:0016832">
    <property type="term" value="F:aldehyde-lyase activity"/>
    <property type="evidence" value="ECO:0007669"/>
    <property type="project" value="UniProtKB-UniRule"/>
</dbReference>
<dbReference type="GO" id="GO:0005975">
    <property type="term" value="P:carbohydrate metabolic process"/>
    <property type="evidence" value="ECO:0007669"/>
    <property type="project" value="InterPro"/>
</dbReference>
<dbReference type="CDD" id="cd02011">
    <property type="entry name" value="TPP_PK"/>
    <property type="match status" value="1"/>
</dbReference>
<dbReference type="Gene3D" id="3.40.50.920">
    <property type="match status" value="1"/>
</dbReference>
<dbReference type="Gene3D" id="3.40.50.970">
    <property type="match status" value="2"/>
</dbReference>
<dbReference type="HAMAP" id="MF_01403">
    <property type="entry name" value="Phosphoketolase"/>
    <property type="match status" value="1"/>
</dbReference>
<dbReference type="InterPro" id="IPR023962">
    <property type="entry name" value="Phosphoketolase"/>
</dbReference>
<dbReference type="InterPro" id="IPR029061">
    <property type="entry name" value="THDP-binding"/>
</dbReference>
<dbReference type="InterPro" id="IPR009014">
    <property type="entry name" value="Transketo_C/PFOR_II"/>
</dbReference>
<dbReference type="InterPro" id="IPR005593">
    <property type="entry name" value="Xul5P/Fru6P_PKetolase"/>
</dbReference>
<dbReference type="InterPro" id="IPR018969">
    <property type="entry name" value="Xul5P/Fru6P_PKetolase_C"/>
</dbReference>
<dbReference type="InterPro" id="IPR019790">
    <property type="entry name" value="Xul5P/Fru6P_PKetolase_CS"/>
</dbReference>
<dbReference type="InterPro" id="IPR018970">
    <property type="entry name" value="Xul5P/Fru6P_PKetolase_N"/>
</dbReference>
<dbReference type="InterPro" id="IPR019789">
    <property type="entry name" value="Xul5P/Fru6P_PKetolase_ThDP_BS"/>
</dbReference>
<dbReference type="NCBIfam" id="NF003616">
    <property type="entry name" value="PRK05261.1-1"/>
    <property type="match status" value="1"/>
</dbReference>
<dbReference type="NCBIfam" id="NF003617">
    <property type="entry name" value="PRK05261.1-2"/>
    <property type="match status" value="1"/>
</dbReference>
<dbReference type="NCBIfam" id="NF003619">
    <property type="entry name" value="PRK05261.1-4"/>
    <property type="match status" value="1"/>
</dbReference>
<dbReference type="NCBIfam" id="NF003621">
    <property type="entry name" value="PRK05261.1-6"/>
    <property type="match status" value="1"/>
</dbReference>
<dbReference type="PANTHER" id="PTHR31273">
    <property type="entry name" value="PHOSPHOKETOLASE-RELATED"/>
    <property type="match status" value="1"/>
</dbReference>
<dbReference type="PANTHER" id="PTHR31273:SF0">
    <property type="entry name" value="PHOSPHOKETOLASE-RELATED"/>
    <property type="match status" value="1"/>
</dbReference>
<dbReference type="Pfam" id="PF03894">
    <property type="entry name" value="XFP"/>
    <property type="match status" value="1"/>
</dbReference>
<dbReference type="Pfam" id="PF09363">
    <property type="entry name" value="XFP_C"/>
    <property type="match status" value="1"/>
</dbReference>
<dbReference type="Pfam" id="PF09364">
    <property type="entry name" value="XFP_N"/>
    <property type="match status" value="1"/>
</dbReference>
<dbReference type="PIRSF" id="PIRSF017245">
    <property type="entry name" value="Phosphoketolase"/>
    <property type="match status" value="1"/>
</dbReference>
<dbReference type="SUPFAM" id="SSF52518">
    <property type="entry name" value="Thiamin diphosphate-binding fold (THDP-binding)"/>
    <property type="match status" value="2"/>
</dbReference>
<dbReference type="PROSITE" id="PS60002">
    <property type="entry name" value="PHOSPHOKETOLASE_1"/>
    <property type="match status" value="1"/>
</dbReference>
<dbReference type="PROSITE" id="PS60003">
    <property type="entry name" value="PHOSPHOKETOLASE_2"/>
    <property type="match status" value="1"/>
</dbReference>
<protein>
    <recommendedName>
        <fullName evidence="1">Probable phosphoketolase</fullName>
        <ecNumber evidence="1">4.1.2.-</ecNumber>
    </recommendedName>
</protein>